<dbReference type="EMBL" id="CP000920">
    <property type="protein sequence ID" value="ACO20879.1"/>
    <property type="molecule type" value="Genomic_DNA"/>
</dbReference>
<dbReference type="RefSeq" id="WP_000624044.1">
    <property type="nucleotide sequence ID" value="NC_012467.1"/>
</dbReference>
<dbReference type="SMR" id="C1CIB3"/>
<dbReference type="GeneID" id="93738973"/>
<dbReference type="KEGG" id="spp:SPP_0276"/>
<dbReference type="HOGENOM" id="CLU_098841_0_1_9"/>
<dbReference type="GO" id="GO:0022625">
    <property type="term" value="C:cytosolic large ribosomal subunit"/>
    <property type="evidence" value="ECO:0007669"/>
    <property type="project" value="TreeGrafter"/>
</dbReference>
<dbReference type="GO" id="GO:0008097">
    <property type="term" value="F:5S rRNA binding"/>
    <property type="evidence" value="ECO:0007669"/>
    <property type="project" value="TreeGrafter"/>
</dbReference>
<dbReference type="GO" id="GO:0003735">
    <property type="term" value="F:structural constituent of ribosome"/>
    <property type="evidence" value="ECO:0007669"/>
    <property type="project" value="InterPro"/>
</dbReference>
<dbReference type="GO" id="GO:0006412">
    <property type="term" value="P:translation"/>
    <property type="evidence" value="ECO:0007669"/>
    <property type="project" value="UniProtKB-UniRule"/>
</dbReference>
<dbReference type="CDD" id="cd00432">
    <property type="entry name" value="Ribosomal_L18_L5e"/>
    <property type="match status" value="1"/>
</dbReference>
<dbReference type="FunFam" id="3.30.420.100:FF:000001">
    <property type="entry name" value="50S ribosomal protein L18"/>
    <property type="match status" value="1"/>
</dbReference>
<dbReference type="Gene3D" id="3.30.420.100">
    <property type="match status" value="1"/>
</dbReference>
<dbReference type="HAMAP" id="MF_01337_B">
    <property type="entry name" value="Ribosomal_uL18_B"/>
    <property type="match status" value="1"/>
</dbReference>
<dbReference type="InterPro" id="IPR004389">
    <property type="entry name" value="Ribosomal_uL18_bac-type"/>
</dbReference>
<dbReference type="InterPro" id="IPR005484">
    <property type="entry name" value="Ribosomal_uL18_bac/euk"/>
</dbReference>
<dbReference type="NCBIfam" id="TIGR00060">
    <property type="entry name" value="L18_bact"/>
    <property type="match status" value="1"/>
</dbReference>
<dbReference type="PANTHER" id="PTHR12899">
    <property type="entry name" value="39S RIBOSOMAL PROTEIN L18, MITOCHONDRIAL"/>
    <property type="match status" value="1"/>
</dbReference>
<dbReference type="PANTHER" id="PTHR12899:SF3">
    <property type="entry name" value="LARGE RIBOSOMAL SUBUNIT PROTEIN UL18M"/>
    <property type="match status" value="1"/>
</dbReference>
<dbReference type="Pfam" id="PF00861">
    <property type="entry name" value="Ribosomal_L18p"/>
    <property type="match status" value="1"/>
</dbReference>
<dbReference type="SUPFAM" id="SSF53137">
    <property type="entry name" value="Translational machinery components"/>
    <property type="match status" value="1"/>
</dbReference>
<name>RL18_STRZP</name>
<evidence type="ECO:0000255" key="1">
    <source>
        <dbReference type="HAMAP-Rule" id="MF_01337"/>
    </source>
</evidence>
<evidence type="ECO:0000256" key="2">
    <source>
        <dbReference type="SAM" id="MobiDB-lite"/>
    </source>
</evidence>
<evidence type="ECO:0000305" key="3"/>
<sequence length="118" mass="12867">MISKPDKNKLRQKRHRRVRGKLSGTADRPRLNVFRSNTGIYAQVIDDVAGVTLASASTLDKEVSKGTKTEQAVAVGKLVAERANAKGISEVVFDRGGYLYHGRVKALADAARENGLKF</sequence>
<protein>
    <recommendedName>
        <fullName evidence="1">Large ribosomal subunit protein uL18</fullName>
    </recommendedName>
    <alternativeName>
        <fullName evidence="3">50S ribosomal protein L18</fullName>
    </alternativeName>
</protein>
<organism>
    <name type="scientific">Streptococcus pneumoniae (strain P1031)</name>
    <dbReference type="NCBI Taxonomy" id="488223"/>
    <lineage>
        <taxon>Bacteria</taxon>
        <taxon>Bacillati</taxon>
        <taxon>Bacillota</taxon>
        <taxon>Bacilli</taxon>
        <taxon>Lactobacillales</taxon>
        <taxon>Streptococcaceae</taxon>
        <taxon>Streptococcus</taxon>
    </lineage>
</organism>
<proteinExistence type="inferred from homology"/>
<accession>C1CIB3</accession>
<gene>
    <name evidence="1" type="primary">rplR</name>
    <name type="ordered locus">SPP_0276</name>
</gene>
<feature type="chain" id="PRO_1000166253" description="Large ribosomal subunit protein uL18">
    <location>
        <begin position="1"/>
        <end position="118"/>
    </location>
</feature>
<feature type="region of interest" description="Disordered" evidence="2">
    <location>
        <begin position="1"/>
        <end position="25"/>
    </location>
</feature>
<feature type="compositionally biased region" description="Basic residues" evidence="2">
    <location>
        <begin position="10"/>
        <end position="20"/>
    </location>
</feature>
<keyword id="KW-0687">Ribonucleoprotein</keyword>
<keyword id="KW-0689">Ribosomal protein</keyword>
<keyword id="KW-0694">RNA-binding</keyword>
<keyword id="KW-0699">rRNA-binding</keyword>
<reference key="1">
    <citation type="journal article" date="2010" name="Genome Biol.">
        <title>Structure and dynamics of the pan-genome of Streptococcus pneumoniae and closely related species.</title>
        <authorList>
            <person name="Donati C."/>
            <person name="Hiller N.L."/>
            <person name="Tettelin H."/>
            <person name="Muzzi A."/>
            <person name="Croucher N.J."/>
            <person name="Angiuoli S.V."/>
            <person name="Oggioni M."/>
            <person name="Dunning Hotopp J.C."/>
            <person name="Hu F.Z."/>
            <person name="Riley D.R."/>
            <person name="Covacci A."/>
            <person name="Mitchell T.J."/>
            <person name="Bentley S.D."/>
            <person name="Kilian M."/>
            <person name="Ehrlich G.D."/>
            <person name="Rappuoli R."/>
            <person name="Moxon E.R."/>
            <person name="Masignani V."/>
        </authorList>
    </citation>
    <scope>NUCLEOTIDE SEQUENCE [LARGE SCALE GENOMIC DNA]</scope>
    <source>
        <strain>P1031</strain>
    </source>
</reference>
<comment type="function">
    <text evidence="1">This is one of the proteins that bind and probably mediate the attachment of the 5S RNA into the large ribosomal subunit, where it forms part of the central protuberance.</text>
</comment>
<comment type="subunit">
    <text evidence="1">Part of the 50S ribosomal subunit; part of the 5S rRNA/L5/L18/L25 subcomplex. Contacts the 5S and 23S rRNAs.</text>
</comment>
<comment type="similarity">
    <text evidence="1">Belongs to the universal ribosomal protein uL18 family.</text>
</comment>